<keyword id="KW-0997">Cell inner membrane</keyword>
<keyword id="KW-1003">Cell membrane</keyword>
<keyword id="KW-0274">FAD</keyword>
<keyword id="KW-0285">Flavoprotein</keyword>
<keyword id="KW-0472">Membrane</keyword>
<keyword id="KW-0560">Oxidoreductase</keyword>
<keyword id="KW-1185">Reference proteome</keyword>
<proteinExistence type="evidence at protein level"/>
<accession>P52073</accession>
<accession>P76654</accession>
<accession>Q2M9L7</accession>
<dbReference type="EC" id="1.1.99.14" evidence="3 9"/>
<dbReference type="EMBL" id="L43490">
    <property type="protein sequence ID" value="AAB02531.1"/>
    <property type="molecule type" value="Genomic_DNA"/>
</dbReference>
<dbReference type="EMBL" id="U28377">
    <property type="protein sequence ID" value="AAA69145.1"/>
    <property type="status" value="ALT_FRAME"/>
    <property type="molecule type" value="Genomic_DNA"/>
</dbReference>
<dbReference type="EMBL" id="U00096">
    <property type="protein sequence ID" value="AAT48158.1"/>
    <property type="molecule type" value="Genomic_DNA"/>
</dbReference>
<dbReference type="EMBL" id="AP009048">
    <property type="protein sequence ID" value="BAE77039.1"/>
    <property type="molecule type" value="Genomic_DNA"/>
</dbReference>
<dbReference type="RefSeq" id="WP_000943100.1">
    <property type="nucleotide sequence ID" value="NZ_LN832404.1"/>
</dbReference>
<dbReference type="RefSeq" id="YP_026191.1">
    <property type="nucleotide sequence ID" value="NC_000913.3"/>
</dbReference>
<dbReference type="SMR" id="P52073"/>
<dbReference type="BioGRID" id="4262367">
    <property type="interactions" value="16"/>
</dbReference>
<dbReference type="FunCoup" id="P52073">
    <property type="interactions" value="46"/>
</dbReference>
<dbReference type="STRING" id="511145.b4468"/>
<dbReference type="jPOST" id="P52073"/>
<dbReference type="PaxDb" id="511145-b4468"/>
<dbReference type="DNASU" id="2847718"/>
<dbReference type="EnsemblBacteria" id="AAT48158">
    <property type="protein sequence ID" value="AAT48158"/>
    <property type="gene ID" value="b4468"/>
</dbReference>
<dbReference type="GeneID" id="2847718"/>
<dbReference type="KEGG" id="ecj:JW5487"/>
<dbReference type="KEGG" id="eco:b4468"/>
<dbReference type="KEGG" id="ecoc:C3026_16295"/>
<dbReference type="PATRIC" id="fig|1411691.4.peg.3752"/>
<dbReference type="EchoBASE" id="EB2819"/>
<dbReference type="eggNOG" id="COG0277">
    <property type="taxonomic scope" value="Bacteria"/>
</dbReference>
<dbReference type="HOGENOM" id="CLU_017779_0_0_6"/>
<dbReference type="InParanoid" id="P52073"/>
<dbReference type="OMA" id="GHATCFT"/>
<dbReference type="OrthoDB" id="9811557at2"/>
<dbReference type="PhylomeDB" id="P52073"/>
<dbReference type="BioCyc" id="EcoCyc:G7544-MONOMER"/>
<dbReference type="BioCyc" id="MetaCyc:G7544-MONOMER"/>
<dbReference type="PRO" id="PR:P52073"/>
<dbReference type="Proteomes" id="UP000000625">
    <property type="component" value="Chromosome"/>
</dbReference>
<dbReference type="GO" id="GO:0005886">
    <property type="term" value="C:plasma membrane"/>
    <property type="evidence" value="ECO:0007669"/>
    <property type="project" value="UniProtKB-SubCell"/>
</dbReference>
<dbReference type="GO" id="GO:0047809">
    <property type="term" value="F:D-2-hydroxy-acid dehydrogenase activity"/>
    <property type="evidence" value="ECO:0007669"/>
    <property type="project" value="RHEA"/>
</dbReference>
<dbReference type="GO" id="GO:0071949">
    <property type="term" value="F:FAD binding"/>
    <property type="evidence" value="ECO:0007669"/>
    <property type="project" value="InterPro"/>
</dbReference>
<dbReference type="GO" id="GO:0019154">
    <property type="term" value="F:glycolate dehydrogenase activity"/>
    <property type="evidence" value="ECO:0000315"/>
    <property type="project" value="EcoCyc"/>
</dbReference>
<dbReference type="GO" id="GO:0046296">
    <property type="term" value="P:glycolate catabolic process"/>
    <property type="evidence" value="ECO:0000315"/>
    <property type="project" value="EcoCyc"/>
</dbReference>
<dbReference type="FunFam" id="3.30.465.10:FF:000041">
    <property type="entry name" value="Glycolate oxidase, subunit GlcE"/>
    <property type="match status" value="1"/>
</dbReference>
<dbReference type="Gene3D" id="3.30.465.10">
    <property type="match status" value="1"/>
</dbReference>
<dbReference type="InterPro" id="IPR016166">
    <property type="entry name" value="FAD-bd_PCMH"/>
</dbReference>
<dbReference type="InterPro" id="IPR036318">
    <property type="entry name" value="FAD-bd_PCMH-like_sf"/>
</dbReference>
<dbReference type="InterPro" id="IPR016169">
    <property type="entry name" value="FAD-bd_PCMH_sub2"/>
</dbReference>
<dbReference type="InterPro" id="IPR016164">
    <property type="entry name" value="FAD-linked_Oxase-like_C"/>
</dbReference>
<dbReference type="InterPro" id="IPR006094">
    <property type="entry name" value="Oxid_FAD_bind_N"/>
</dbReference>
<dbReference type="NCBIfam" id="NF008439">
    <property type="entry name" value="PRK11282.1"/>
    <property type="match status" value="1"/>
</dbReference>
<dbReference type="PANTHER" id="PTHR11748">
    <property type="entry name" value="D-LACTATE DEHYDROGENASE"/>
    <property type="match status" value="1"/>
</dbReference>
<dbReference type="PANTHER" id="PTHR11748:SF103">
    <property type="entry name" value="GLYCOLATE OXIDASE SUBUNIT GLCE"/>
    <property type="match status" value="1"/>
</dbReference>
<dbReference type="Pfam" id="PF01565">
    <property type="entry name" value="FAD_binding_4"/>
    <property type="match status" value="1"/>
</dbReference>
<dbReference type="SUPFAM" id="SSF56176">
    <property type="entry name" value="FAD-binding/transporter-associated domain-like"/>
    <property type="match status" value="1"/>
</dbReference>
<dbReference type="SUPFAM" id="SSF55103">
    <property type="entry name" value="FAD-linked oxidases, C-terminal domain"/>
    <property type="match status" value="1"/>
</dbReference>
<dbReference type="PROSITE" id="PS51387">
    <property type="entry name" value="FAD_PCMH"/>
    <property type="match status" value="1"/>
</dbReference>
<sequence length="350" mass="38361">MLRECDYSQALLEQVNQAISDKTPLVIQGSNSKAFLGRPVTGQTLDVRCHRGIVNYDPTELVITARVGTPLVTIEAALESAGQMLPCEPPHYGEEATWGGMVACGLAGPRRPWSGSVRDFVLGTRIITGAGKHLRFGGEVMKNVAGYDLSRLMVGSYGCLGVLTEISMKVLPRPRASLSLRREISLQEAMSEIAEWQLQPLPISGLCYFDNALWIRLEGGEGSVKAARELLGGEEVAGQFWQQLREQQLPFFSLPGTLWRISLPSDAPMMDLPGEQLIDWGGALRWLKSTAEDNQIHRIARNAGGHATRFSAGDGGFAPLSAPLFRYHQQLKQQLDPCGVFNPGRMYAEL</sequence>
<reference key="1">
    <citation type="journal article" date="1996" name="J. Bacteriol.">
        <title>glc locus of Escherichia coli: characterization of genes encoding the subunits of glycolate oxidase and the glc regulator protein.</title>
        <authorList>
            <person name="Pellicer M.T."/>
            <person name="Badia J."/>
            <person name="Aguilar J.T."/>
            <person name="Baldoma L."/>
        </authorList>
    </citation>
    <scope>NUCLEOTIDE SEQUENCE [GENOMIC DNA]</scope>
    <scope>FUNCTION</scope>
    <scope>DISRUPTION PHENOTYPE</scope>
    <scope>SUBUNIT</scope>
    <source>
        <strain>K12 / W3110 / ATCC 27325 / DSM 5911</strain>
    </source>
</reference>
<reference key="2">
    <citation type="journal article" date="1997" name="Science">
        <title>The complete genome sequence of Escherichia coli K-12.</title>
        <authorList>
            <person name="Blattner F.R."/>
            <person name="Plunkett G. III"/>
            <person name="Bloch C.A."/>
            <person name="Perna N.T."/>
            <person name="Burland V."/>
            <person name="Riley M."/>
            <person name="Collado-Vides J."/>
            <person name="Glasner J.D."/>
            <person name="Rode C.K."/>
            <person name="Mayhew G.F."/>
            <person name="Gregor J."/>
            <person name="Davis N.W."/>
            <person name="Kirkpatrick H.A."/>
            <person name="Goeden M.A."/>
            <person name="Rose D.J."/>
            <person name="Mau B."/>
            <person name="Shao Y."/>
        </authorList>
    </citation>
    <scope>NUCLEOTIDE SEQUENCE [LARGE SCALE GENOMIC DNA]</scope>
    <source>
        <strain>K12 / MG1655 / ATCC 47076</strain>
    </source>
</reference>
<reference key="3">
    <citation type="journal article" date="2006" name="Nucleic Acids Res.">
        <title>Escherichia coli K-12: a cooperatively developed annotation snapshot -- 2005.</title>
        <authorList>
            <person name="Riley M."/>
            <person name="Abe T."/>
            <person name="Arnaud M.B."/>
            <person name="Berlyn M.K.B."/>
            <person name="Blattner F.R."/>
            <person name="Chaudhuri R.R."/>
            <person name="Glasner J.D."/>
            <person name="Horiuchi T."/>
            <person name="Keseler I.M."/>
            <person name="Kosuge T."/>
            <person name="Mori H."/>
            <person name="Perna N.T."/>
            <person name="Plunkett G. III"/>
            <person name="Rudd K.E."/>
            <person name="Serres M.H."/>
            <person name="Thomas G.H."/>
            <person name="Thomson N.R."/>
            <person name="Wishart D."/>
            <person name="Wanner B.L."/>
        </authorList>
    </citation>
    <scope>SEQUENCE REVISION</scope>
</reference>
<reference key="4">
    <citation type="journal article" date="2006" name="Mol. Syst. Biol.">
        <title>Highly accurate genome sequences of Escherichia coli K-12 strains MG1655 and W3110.</title>
        <authorList>
            <person name="Hayashi K."/>
            <person name="Morooka N."/>
            <person name="Yamamoto Y."/>
            <person name="Fujita K."/>
            <person name="Isono K."/>
            <person name="Choi S."/>
            <person name="Ohtsubo E."/>
            <person name="Baba T."/>
            <person name="Wanner B.L."/>
            <person name="Mori H."/>
            <person name="Horiuchi T."/>
        </authorList>
    </citation>
    <scope>NUCLEOTIDE SEQUENCE [LARGE SCALE GENOMIC DNA]</scope>
    <source>
        <strain>K12 / W3110 / ATCC 27325 / DSM 5911</strain>
    </source>
</reference>
<reference key="5">
    <citation type="journal article" date="1972" name="Biochim. Biophys. Acta">
        <title>Glycolate oxidoreductase in Escherichia coli.</title>
        <authorList>
            <person name="Lord J.M."/>
        </authorList>
    </citation>
    <scope>FUNCTION</scope>
    <scope>CATALYTIC ACTIVITY</scope>
    <scope>BIOPHYSICOCHEMICAL PROPERTIES</scope>
    <scope>ACTIVITY REGULATION</scope>
    <source>
        <strain>K12</strain>
    </source>
</reference>
<reference key="6">
    <citation type="journal article" date="1989" name="FEBS Lett.">
        <title>The intracellular localization of glycolate oxidoreductase in Escherichia coli.</title>
        <authorList>
            <person name="Sallal A.K."/>
            <person name="Nimer N.A."/>
        </authorList>
    </citation>
    <scope>SUBCELLULAR LOCATION</scope>
    <source>
        <strain>ATCC 11775</strain>
    </source>
</reference>
<reference key="7">
    <citation type="journal article" date="1999" name="J. Biol. Chem.">
        <title>Cross-induction of glc and ace operons of Escherichia coli attributable to pathway intersection. Characterization of the glc promoter.</title>
        <authorList>
            <person name="Pellicer M.T."/>
            <person name="Fernandez C."/>
            <person name="Badia J."/>
            <person name="Aguilar J."/>
            <person name="Lin E.C."/>
            <person name="Baldom L."/>
        </authorList>
    </citation>
    <scope>INDUCTION</scope>
    <source>
        <strain>K12 / MC4100</strain>
    </source>
</reference>
<comment type="function">
    <text evidence="3 4">Component of a complex that catalyzes the oxidation of glycolate to glyoxylate (PubMed:4557653, PubMed:8606183). Is required for E.coli to grow on glycolate as a sole source of carbon (PubMed:8606183). Is also able to oxidize D-lactate ((R)-lactate) with a similar rate (PubMed:4557653). Does not link directly to O(2), and 2,6-dichloroindophenol (DCIP) and phenazine methosulfate (PMS) can act as artificial electron acceptors in vitro, but the physiological molecule that functions as a primary electron acceptor during glycolate oxidation is unknown (PubMed:4557653).</text>
</comment>
<comment type="catalytic activity">
    <reaction evidence="3 9">
        <text>glycolate + A = glyoxylate + AH2</text>
        <dbReference type="Rhea" id="RHEA:21264"/>
        <dbReference type="ChEBI" id="CHEBI:13193"/>
        <dbReference type="ChEBI" id="CHEBI:17499"/>
        <dbReference type="ChEBI" id="CHEBI:29805"/>
        <dbReference type="ChEBI" id="CHEBI:36655"/>
        <dbReference type="EC" id="1.1.99.14"/>
    </reaction>
    <physiologicalReaction direction="left-to-right" evidence="4 8">
        <dbReference type="Rhea" id="RHEA:21265"/>
    </physiologicalReaction>
</comment>
<comment type="catalytic activity">
    <reaction evidence="3">
        <text>(R)-lactate + A = pyruvate + AH2</text>
        <dbReference type="Rhea" id="RHEA:15089"/>
        <dbReference type="ChEBI" id="CHEBI:13193"/>
        <dbReference type="ChEBI" id="CHEBI:15361"/>
        <dbReference type="ChEBI" id="CHEBI:16004"/>
        <dbReference type="ChEBI" id="CHEBI:17499"/>
    </reaction>
</comment>
<comment type="cofactor">
    <cofactor evidence="7">
        <name>FAD</name>
        <dbReference type="ChEBI" id="CHEBI:57692"/>
    </cofactor>
</comment>
<comment type="activity regulation">
    <text evidence="3">In vitro the glycolate oxidase activity is inhibited by the sulfhydryl inhibitors CuSO4 and PCMB, by KCN, but not by the metal complexing agent EDTA.</text>
</comment>
<comment type="biophysicochemical properties">
    <kinetics>
        <KM evidence="3">40 uM for glycolate</KM>
        <KM evidence="3">0.7 mM for D-lactate</KM>
        <text evidence="8">Parameters measured from a partially purified enzyme from extracts of glycolate grown cells.</text>
    </kinetics>
    <phDependence>
        <text evidence="3">Optimum pH is 8.0-8.8.</text>
    </phDependence>
</comment>
<comment type="subunit">
    <text evidence="4">The glycolate oxidase likely consists of three subunits, GlcD, GlcE and GlcF.</text>
</comment>
<comment type="subcellular location">
    <subcellularLocation>
        <location evidence="2">Cell inner membrane</location>
    </subcellularLocation>
    <text evidence="2">Glycolate oxidoreductase activity was shown to be firmly associated with the cytoplasmic membranes.</text>
</comment>
<comment type="induction">
    <text evidence="5">Part of the glcDEFGB operon, which is induced by growth on glycolate, under the positive control of GlcC. Also induced by growth on acetate. Expression of the glc operon is strongly dependent on the integration host factor (IHF) and is repressed by the global respiratory regulator ArcA-P.</text>
</comment>
<comment type="disruption phenotype">
    <text evidence="4">Abolishes glycolate oxidase activity. Is unable to grow on glycolate as the sole source of carbon, in contrast to wild type.</text>
</comment>
<comment type="sequence caution" evidence="7">
    <conflict type="frameshift">
        <sequence resource="EMBL-CDS" id="AAA69145"/>
    </conflict>
    <text>Fuses together glcE and glcF.</text>
</comment>
<name>GLCE_ECOLI</name>
<gene>
    <name evidence="6" type="primary">glcE</name>
    <name type="synonym">gox</name>
    <name type="synonym">yghL</name>
    <name type="ordered locus">b4468</name>
    <name type="ordered locus">JW5487</name>
</gene>
<feature type="chain" id="PRO_0000087503" description="Glycolate oxidase subunit GlcE">
    <location>
        <begin position="1"/>
        <end position="350"/>
    </location>
</feature>
<feature type="domain" description="FAD-binding PCMH-type" evidence="1">
    <location>
        <begin position="1"/>
        <end position="173"/>
    </location>
</feature>
<organism>
    <name type="scientific">Escherichia coli (strain K12)</name>
    <dbReference type="NCBI Taxonomy" id="83333"/>
    <lineage>
        <taxon>Bacteria</taxon>
        <taxon>Pseudomonadati</taxon>
        <taxon>Pseudomonadota</taxon>
        <taxon>Gammaproteobacteria</taxon>
        <taxon>Enterobacterales</taxon>
        <taxon>Enterobacteriaceae</taxon>
        <taxon>Escherichia</taxon>
    </lineage>
</organism>
<protein>
    <recommendedName>
        <fullName evidence="9">Glycolate oxidase subunit GlcE</fullName>
        <ecNumber evidence="3 9">1.1.99.14</ecNumber>
    </recommendedName>
    <alternativeName>
        <fullName>Glycolate dehydrogenase subunit GlcE</fullName>
    </alternativeName>
</protein>
<evidence type="ECO:0000255" key="1">
    <source>
        <dbReference type="PROSITE-ProRule" id="PRU00718"/>
    </source>
</evidence>
<evidence type="ECO:0000269" key="2">
    <source>
    </source>
</evidence>
<evidence type="ECO:0000269" key="3">
    <source>
    </source>
</evidence>
<evidence type="ECO:0000269" key="4">
    <source>
    </source>
</evidence>
<evidence type="ECO:0000269" key="5">
    <source>
    </source>
</evidence>
<evidence type="ECO:0000303" key="6">
    <source>
    </source>
</evidence>
<evidence type="ECO:0000305" key="7"/>
<evidence type="ECO:0000305" key="8">
    <source>
    </source>
</evidence>
<evidence type="ECO:0000305" key="9">
    <source>
    </source>
</evidence>